<gene>
    <name evidence="1" type="primary">cinA</name>
    <name type="ordered locus">BQ2027_MB1936</name>
</gene>
<protein>
    <recommendedName>
        <fullName evidence="1">CinA-like protein</fullName>
    </recommendedName>
</protein>
<sequence>MAVSARAGIVITGTEVLTGRVQDRNGPWIADRLLELGVELAHITICGDRPADIEAQLRFMAEQGVDLIVTSGGLGPTADDMTVEVVARYCGRELVLDDELENRIANILKKLMGRNPAIEPANFDSIRAANRKQAMIPAGSQVIDPVGTAPGLVVPGRPAVMVLPGPPRELQPIWSKAIQTAPVQDAIAGRTTYRQETIRIFGLPESSLADTLRDAEAAIPGFDLVEITTCLRRGEIEMVTRFEPNAAQVYTQLARLLRDRHGHQVYSEDGASVDELVAKLLTGRRIATAESCTAGLLAARLTDRPGSSKYVAGAVVAYSNEAKAQLLGVDPALIEAHGAVSEPVAQAMAAGALQGFGADTATAITGIAGPSGGTPEKPVGTVCFTVLLDDGRTTTRTVRLPGNRSDIRERSTTVAMHLLRRTLSGIPGSP</sequence>
<organism>
    <name type="scientific">Mycobacterium bovis (strain ATCC BAA-935 / AF2122/97)</name>
    <dbReference type="NCBI Taxonomy" id="233413"/>
    <lineage>
        <taxon>Bacteria</taxon>
        <taxon>Bacillati</taxon>
        <taxon>Actinomycetota</taxon>
        <taxon>Actinomycetes</taxon>
        <taxon>Mycobacteriales</taxon>
        <taxon>Mycobacteriaceae</taxon>
        <taxon>Mycobacterium</taxon>
        <taxon>Mycobacterium tuberculosis complex</taxon>
    </lineage>
</organism>
<comment type="similarity">
    <text evidence="1">Belongs to the CinA family.</text>
</comment>
<evidence type="ECO:0000255" key="1">
    <source>
        <dbReference type="HAMAP-Rule" id="MF_00226"/>
    </source>
</evidence>
<proteinExistence type="inferred from homology"/>
<reference key="1">
    <citation type="journal article" date="2003" name="Proc. Natl. Acad. Sci. U.S.A.">
        <title>The complete genome sequence of Mycobacterium bovis.</title>
        <authorList>
            <person name="Garnier T."/>
            <person name="Eiglmeier K."/>
            <person name="Camus J.-C."/>
            <person name="Medina N."/>
            <person name="Mansoor H."/>
            <person name="Pryor M."/>
            <person name="Duthoy S."/>
            <person name="Grondin S."/>
            <person name="Lacroix C."/>
            <person name="Monsempe C."/>
            <person name="Simon S."/>
            <person name="Harris B."/>
            <person name="Atkin R."/>
            <person name="Doggett J."/>
            <person name="Mayes R."/>
            <person name="Keating L."/>
            <person name="Wheeler P.R."/>
            <person name="Parkhill J."/>
            <person name="Barrell B.G."/>
            <person name="Cole S.T."/>
            <person name="Gordon S.V."/>
            <person name="Hewinson R.G."/>
        </authorList>
    </citation>
    <scope>NUCLEOTIDE SEQUENCE [LARGE SCALE GENOMIC DNA]</scope>
    <source>
        <strain>ATCC BAA-935 / AF2122/97</strain>
    </source>
</reference>
<reference key="2">
    <citation type="journal article" date="2017" name="Genome Announc.">
        <title>Updated reference genome sequence and annotation of Mycobacterium bovis AF2122/97.</title>
        <authorList>
            <person name="Malone K.M."/>
            <person name="Farrell D."/>
            <person name="Stuber T.P."/>
            <person name="Schubert O.T."/>
            <person name="Aebersold R."/>
            <person name="Robbe-Austerman S."/>
            <person name="Gordon S.V."/>
        </authorList>
    </citation>
    <scope>NUCLEOTIDE SEQUENCE [LARGE SCALE GENOMIC DNA]</scope>
    <scope>GENOME REANNOTATION</scope>
    <source>
        <strain>ATCC BAA-935 / AF2122/97</strain>
    </source>
</reference>
<dbReference type="EMBL" id="LT708304">
    <property type="protein sequence ID" value="SIU00539.1"/>
    <property type="molecule type" value="Genomic_DNA"/>
</dbReference>
<dbReference type="RefSeq" id="NP_855587.1">
    <property type="nucleotide sequence ID" value="NC_002945.3"/>
</dbReference>
<dbReference type="RefSeq" id="WP_003900426.1">
    <property type="nucleotide sequence ID" value="NC_002945.4"/>
</dbReference>
<dbReference type="SMR" id="P63776"/>
<dbReference type="KEGG" id="mbo:BQ2027_MB1936"/>
<dbReference type="PATRIC" id="fig|233413.5.peg.2124"/>
<dbReference type="Proteomes" id="UP000001419">
    <property type="component" value="Chromosome"/>
</dbReference>
<dbReference type="CDD" id="cd00885">
    <property type="entry name" value="cinA"/>
    <property type="match status" value="1"/>
</dbReference>
<dbReference type="FunFam" id="3.40.980.10:FF:000018">
    <property type="entry name" value="CinA-like protein"/>
    <property type="match status" value="1"/>
</dbReference>
<dbReference type="Gene3D" id="3.90.950.20">
    <property type="entry name" value="CinA-like"/>
    <property type="match status" value="1"/>
</dbReference>
<dbReference type="Gene3D" id="3.40.980.10">
    <property type="entry name" value="MoaB/Mog-like domain"/>
    <property type="match status" value="1"/>
</dbReference>
<dbReference type="HAMAP" id="MF_00226_B">
    <property type="entry name" value="CinA_B"/>
    <property type="match status" value="1"/>
</dbReference>
<dbReference type="InterPro" id="IPR050101">
    <property type="entry name" value="CinA"/>
</dbReference>
<dbReference type="InterPro" id="IPR036653">
    <property type="entry name" value="CinA-like_C"/>
</dbReference>
<dbReference type="InterPro" id="IPR008136">
    <property type="entry name" value="CinA_C"/>
</dbReference>
<dbReference type="InterPro" id="IPR008135">
    <property type="entry name" value="Competence-induced_CinA"/>
</dbReference>
<dbReference type="InterPro" id="IPR036425">
    <property type="entry name" value="MoaB/Mog-like_dom_sf"/>
</dbReference>
<dbReference type="InterPro" id="IPR001453">
    <property type="entry name" value="MoaB/Mog_dom"/>
</dbReference>
<dbReference type="NCBIfam" id="TIGR00200">
    <property type="entry name" value="cinA_nterm"/>
    <property type="match status" value="1"/>
</dbReference>
<dbReference type="NCBIfam" id="TIGR00199">
    <property type="entry name" value="PncC_domain"/>
    <property type="match status" value="1"/>
</dbReference>
<dbReference type="NCBIfam" id="NF001813">
    <property type="entry name" value="PRK00549.1"/>
    <property type="match status" value="1"/>
</dbReference>
<dbReference type="PANTHER" id="PTHR13939">
    <property type="entry name" value="NICOTINAMIDE-NUCLEOTIDE AMIDOHYDROLASE PNCC"/>
    <property type="match status" value="1"/>
</dbReference>
<dbReference type="PANTHER" id="PTHR13939:SF0">
    <property type="entry name" value="NMN AMIDOHYDROLASE-LIKE PROTEIN YFAY"/>
    <property type="match status" value="1"/>
</dbReference>
<dbReference type="Pfam" id="PF02464">
    <property type="entry name" value="CinA"/>
    <property type="match status" value="1"/>
</dbReference>
<dbReference type="Pfam" id="PF00994">
    <property type="entry name" value="MoCF_biosynth"/>
    <property type="match status" value="1"/>
</dbReference>
<dbReference type="PIRSF" id="PIRSF006728">
    <property type="entry name" value="CinA"/>
    <property type="match status" value="1"/>
</dbReference>
<dbReference type="SMART" id="SM00852">
    <property type="entry name" value="MoCF_biosynth"/>
    <property type="match status" value="1"/>
</dbReference>
<dbReference type="SUPFAM" id="SSF142433">
    <property type="entry name" value="CinA-like"/>
    <property type="match status" value="1"/>
</dbReference>
<dbReference type="SUPFAM" id="SSF53218">
    <property type="entry name" value="Molybdenum cofactor biosynthesis proteins"/>
    <property type="match status" value="1"/>
</dbReference>
<keyword id="KW-1185">Reference proteome</keyword>
<feature type="chain" id="PRO_0000156767" description="CinA-like protein">
    <location>
        <begin position="1"/>
        <end position="430"/>
    </location>
</feature>
<name>CINAL_MYCBO</name>
<accession>P63776</accession>
<accession>A0A1R3XZQ6</accession>
<accession>O07731</accession>
<accession>X2BJ98</accession>